<feature type="transit peptide" description="Mitochondrion" evidence="4">
    <location>
        <begin position="1" status="less than"/>
        <end position="17"/>
    </location>
</feature>
<feature type="chain" id="PRO_0000006558" description="Cytochrome c1-2, heme protein, mitochondrial">
    <location>
        <begin position="18"/>
        <end position="260"/>
    </location>
</feature>
<feature type="topological domain" description="Mitochondrial intermembrane" evidence="1">
    <location>
        <begin position="18"/>
        <end position="221"/>
    </location>
</feature>
<feature type="transmembrane region" description="Helical" evidence="2">
    <location>
        <begin position="222"/>
        <end position="241"/>
    </location>
</feature>
<feature type="topological domain" description="Mitochondrial matrix" evidence="1">
    <location>
        <begin position="242"/>
        <end position="260"/>
    </location>
</feature>
<feature type="domain" description="Cytochrome c" evidence="3">
    <location>
        <begin position="43"/>
        <end position="150"/>
    </location>
</feature>
<feature type="binding site" description="covalent" evidence="1">
    <location>
        <position position="56"/>
    </location>
    <ligand>
        <name>heme c</name>
        <dbReference type="ChEBI" id="CHEBI:61717"/>
    </ligand>
</feature>
<feature type="binding site" description="covalent" evidence="1">
    <location>
        <position position="59"/>
    </location>
    <ligand>
        <name>heme c</name>
        <dbReference type="ChEBI" id="CHEBI:61717"/>
    </ligand>
</feature>
<feature type="binding site" description="axial binding residue" evidence="1">
    <location>
        <position position="60"/>
    </location>
    <ligand>
        <name>heme c</name>
        <dbReference type="ChEBI" id="CHEBI:61717"/>
    </ligand>
    <ligandPart>
        <name>Fe</name>
        <dbReference type="ChEBI" id="CHEBI:18248"/>
    </ligandPart>
</feature>
<feature type="binding site" description="axial binding residue" evidence="1">
    <location>
        <position position="179"/>
    </location>
    <ligand>
        <name>heme c</name>
        <dbReference type="ChEBI" id="CHEBI:61717"/>
    </ligand>
    <ligandPart>
        <name>Fe</name>
        <dbReference type="ChEBI" id="CHEBI:18248"/>
    </ligandPart>
</feature>
<feature type="non-terminal residue">
    <location>
        <position position="1"/>
    </location>
</feature>
<reference key="1">
    <citation type="journal article" date="1992" name="Mol. Gen. Genet.">
        <title>Cytochrome c1 from potato: a protein with a presequence for targeting to the mitochondrial intermembrane space.</title>
        <authorList>
            <person name="Braun H.P."/>
            <person name="Emmermann M."/>
            <person name="Kruft V."/>
            <person name="Schmitz U.K."/>
        </authorList>
    </citation>
    <scope>NUCLEOTIDE SEQUENCE [MRNA]</scope>
    <scope>PROTEIN SEQUENCE OF 18-37</scope>
    <source>
        <strain>cv. Desiree</strain>
        <tissue>Green leaf</tissue>
    </source>
</reference>
<comment type="function">
    <text evidence="1">Component of the ubiquinol-cytochrome c oxidoreductase, a multisubunit transmembrane complex that is part of the mitochondrial electron transport chain which drives oxidative phosphorylation. The respiratory chain contains 3 multisubunit complexes succinate dehydrogenase (complex II, CII), ubiquinol-cytochrome c oxidoreductase (cytochrome b-c1 complex, complex III, CIII) and cytochrome c oxidase (complex IV, CIV), that cooperate to transfer electrons derived from NADH and succinate to molecular oxygen, creating an electrochemical gradient over the inner membrane that drives transmembrane transport and the ATP synthase. The cytochrome b-c1 complex catalyzes electron transfer from ubiquinol to cytochrome c, linking this redox reaction to translocation of protons across the mitochondrial inner membrane, with protons being carried across the membrane as hydrogens on the quinol. In the process called Q cycle, 2 protons are consumed from the matrix, 4 protons are released into the intermembrane space and 2 electrons are passed to cytochrome c. Cytochrome c1 is a catalytic core subunit containing a c-type heme. It transfers electrons from the [2Fe-2S] iron-sulfur cluster of the Rieske protein to cytochrome c.</text>
</comment>
<comment type="catalytic activity">
    <reaction evidence="1">
        <text>a quinol + 2 Fe(III)-[cytochrome c](out) = a quinone + 2 Fe(II)-[cytochrome c](out) + 2 H(+)(out)</text>
        <dbReference type="Rhea" id="RHEA:11484"/>
        <dbReference type="Rhea" id="RHEA-COMP:10350"/>
        <dbReference type="Rhea" id="RHEA-COMP:14399"/>
        <dbReference type="ChEBI" id="CHEBI:15378"/>
        <dbReference type="ChEBI" id="CHEBI:24646"/>
        <dbReference type="ChEBI" id="CHEBI:29033"/>
        <dbReference type="ChEBI" id="CHEBI:29034"/>
        <dbReference type="ChEBI" id="CHEBI:132124"/>
        <dbReference type="EC" id="7.1.1.8"/>
    </reaction>
</comment>
<comment type="cofactor">
    <cofactor evidence="1">
        <name>heme c</name>
        <dbReference type="ChEBI" id="CHEBI:61717"/>
    </cofactor>
    <text evidence="1">Binds 1 heme c group covalently per subunit.</text>
</comment>
<comment type="subunit">
    <text evidence="1">Component of the ubiquinol-cytochrome c oxidoreductase (cytochrome b-c1 complex, complex III, CIII), a multisubunit enzyme composed of 3 respiratory subunits cytochrome b, cytochrome c1 and Rieske protein, 2 core protein subunits, and additional low-molecular weight protein subunits. The complex exists as an obligatory dimer and forms supercomplexes (SCs) in the inner mitochondrial membrane with cytochrome c oxidase (complex IV, CIV).</text>
</comment>
<comment type="subcellular location">
    <subcellularLocation>
        <location evidence="1">Mitochondrion inner membrane</location>
        <topology evidence="1">Single-pass membrane protein</topology>
    </subcellularLocation>
</comment>
<comment type="tissue specificity">
    <text>In all tissues analyzed.</text>
</comment>
<comment type="similarity">
    <text evidence="5">Belongs to the cytochrome c family.</text>
</comment>
<proteinExistence type="evidence at protein level"/>
<gene>
    <name type="primary">CYCL</name>
</gene>
<dbReference type="EC" id="7.1.1.8"/>
<dbReference type="SMR" id="P29610"/>
<dbReference type="STRING" id="4113.P29610"/>
<dbReference type="PaxDb" id="4113-PGSC0003DMT400052104"/>
<dbReference type="eggNOG" id="KOG3052">
    <property type="taxonomic scope" value="Eukaryota"/>
</dbReference>
<dbReference type="InParanoid" id="P29610"/>
<dbReference type="Proteomes" id="UP000011115">
    <property type="component" value="Unassembled WGS sequence"/>
</dbReference>
<dbReference type="ExpressionAtlas" id="P29610">
    <property type="expression patterns" value="baseline and differential"/>
</dbReference>
<dbReference type="GO" id="GO:0005743">
    <property type="term" value="C:mitochondrial inner membrane"/>
    <property type="evidence" value="ECO:0007669"/>
    <property type="project" value="UniProtKB-SubCell"/>
</dbReference>
<dbReference type="GO" id="GO:0045275">
    <property type="term" value="C:respiratory chain complex III"/>
    <property type="evidence" value="ECO:0000318"/>
    <property type="project" value="GO_Central"/>
</dbReference>
<dbReference type="GO" id="GO:0020037">
    <property type="term" value="F:heme binding"/>
    <property type="evidence" value="ECO:0007669"/>
    <property type="project" value="InterPro"/>
</dbReference>
<dbReference type="GO" id="GO:0046872">
    <property type="term" value="F:metal ion binding"/>
    <property type="evidence" value="ECO:0007669"/>
    <property type="project" value="UniProtKB-KW"/>
</dbReference>
<dbReference type="GO" id="GO:0008121">
    <property type="term" value="F:ubiquinol-cytochrome-c reductase activity"/>
    <property type="evidence" value="ECO:0007669"/>
    <property type="project" value="UniProtKB-EC"/>
</dbReference>
<dbReference type="GO" id="GO:0006122">
    <property type="term" value="P:mitochondrial electron transport, ubiquinol to cytochrome c"/>
    <property type="evidence" value="ECO:0000318"/>
    <property type="project" value="GO_Central"/>
</dbReference>
<dbReference type="FunFam" id="1.10.760.10:FF:000002">
    <property type="entry name" value="Cytochrome c1, heme protein"/>
    <property type="match status" value="1"/>
</dbReference>
<dbReference type="FunFam" id="1.20.5.100:FF:000003">
    <property type="entry name" value="Cytochrome c1, heme protein, mitochondrial"/>
    <property type="match status" value="1"/>
</dbReference>
<dbReference type="Gene3D" id="1.10.760.10">
    <property type="entry name" value="Cytochrome c-like domain"/>
    <property type="match status" value="1"/>
</dbReference>
<dbReference type="Gene3D" id="1.20.5.100">
    <property type="entry name" value="Cytochrome c1, transmembrane anchor, C-terminal"/>
    <property type="match status" value="1"/>
</dbReference>
<dbReference type="InterPro" id="IPR009056">
    <property type="entry name" value="Cyt_c-like_dom"/>
</dbReference>
<dbReference type="InterPro" id="IPR036909">
    <property type="entry name" value="Cyt_c-like_dom_sf"/>
</dbReference>
<dbReference type="InterPro" id="IPR002326">
    <property type="entry name" value="Cyt_c1"/>
</dbReference>
<dbReference type="InterPro" id="IPR021157">
    <property type="entry name" value="Cyt_c1_TM_anchor_C"/>
</dbReference>
<dbReference type="PANTHER" id="PTHR10266">
    <property type="entry name" value="CYTOCHROME C1"/>
    <property type="match status" value="1"/>
</dbReference>
<dbReference type="PANTHER" id="PTHR10266:SF22">
    <property type="entry name" value="CYTOCHROME C1-2, HEME PROTEIN, MITOCHONDRIAL-LIKE"/>
    <property type="match status" value="1"/>
</dbReference>
<dbReference type="Pfam" id="PF02167">
    <property type="entry name" value="Cytochrom_C1"/>
    <property type="match status" value="1"/>
</dbReference>
<dbReference type="PRINTS" id="PR00603">
    <property type="entry name" value="CYTOCHROMEC1"/>
</dbReference>
<dbReference type="SUPFAM" id="SSF46626">
    <property type="entry name" value="Cytochrome c"/>
    <property type="match status" value="1"/>
</dbReference>
<dbReference type="SUPFAM" id="SSF81496">
    <property type="entry name" value="Cytochrome c1 subunit of cytochrome bc1 complex (Ubiquinol-cytochrome c reductase), transmembrane anchor"/>
    <property type="match status" value="1"/>
</dbReference>
<dbReference type="PROSITE" id="PS51007">
    <property type="entry name" value="CYTC"/>
    <property type="match status" value="1"/>
</dbReference>
<evidence type="ECO:0000250" key="1">
    <source>
        <dbReference type="UniProtKB" id="P07143"/>
    </source>
</evidence>
<evidence type="ECO:0000255" key="2"/>
<evidence type="ECO:0000255" key="3">
    <source>
        <dbReference type="PROSITE-ProRule" id="PRU00433"/>
    </source>
</evidence>
<evidence type="ECO:0000269" key="4">
    <source>
    </source>
</evidence>
<evidence type="ECO:0000305" key="5"/>
<sequence length="260" mass="28592">IGAGVSGLLGFATVASADEAEHGLECPSYPWPHAGILSSYDHASIRRGHQVYQQVCASCHSMSLVSYRDLVGVAYTEEEVKAMAAEIEVEDGPNDEGEMFTRPGKLSDRFPQPYPNEAAARFANGGAYPPDLSLITKARHNGQNYVFALLTAYRDPPAGVSIREGLHYNPYFPGGAIAMPKMLNDGAVEYEDGVPATEAQMGKDVVSFLTWAAEPEMEERKLMGFKWIFVLSLALLQAAYYRRLRWSVLKSRKLVLDVVN</sequence>
<accession>P29610</accession>
<organism>
    <name type="scientific">Solanum tuberosum</name>
    <name type="common">Potato</name>
    <dbReference type="NCBI Taxonomy" id="4113"/>
    <lineage>
        <taxon>Eukaryota</taxon>
        <taxon>Viridiplantae</taxon>
        <taxon>Streptophyta</taxon>
        <taxon>Embryophyta</taxon>
        <taxon>Tracheophyta</taxon>
        <taxon>Spermatophyta</taxon>
        <taxon>Magnoliopsida</taxon>
        <taxon>eudicotyledons</taxon>
        <taxon>Gunneridae</taxon>
        <taxon>Pentapetalae</taxon>
        <taxon>asterids</taxon>
        <taxon>lamiids</taxon>
        <taxon>Solanales</taxon>
        <taxon>Solanaceae</taxon>
        <taxon>Solanoideae</taxon>
        <taxon>Solaneae</taxon>
        <taxon>Solanum</taxon>
    </lineage>
</organism>
<protein>
    <recommendedName>
        <fullName>Cytochrome c1-2, heme protein, mitochondrial</fullName>
        <ecNumber>7.1.1.8</ecNumber>
    </recommendedName>
    <alternativeName>
        <fullName>Clone PC18I</fullName>
    </alternativeName>
    <alternativeName>
        <fullName>Complex III subunit 4-2</fullName>
    </alternativeName>
    <alternativeName>
        <fullName>Complex III subunit IV-2</fullName>
    </alternativeName>
    <alternativeName>
        <fullName>Cytochrome b-c1 complex subunit 4-2</fullName>
    </alternativeName>
    <alternativeName>
        <fullName>Ubiquinol-cytochrome-c reductase complex cytochrome c1 subunit 2</fullName>
        <shortName>Cytochrome c-1-2</shortName>
    </alternativeName>
</protein>
<keyword id="KW-0903">Direct protein sequencing</keyword>
<keyword id="KW-0249">Electron transport</keyword>
<keyword id="KW-0349">Heme</keyword>
<keyword id="KW-0408">Iron</keyword>
<keyword id="KW-0472">Membrane</keyword>
<keyword id="KW-0479">Metal-binding</keyword>
<keyword id="KW-0496">Mitochondrion</keyword>
<keyword id="KW-0999">Mitochondrion inner membrane</keyword>
<keyword id="KW-1185">Reference proteome</keyword>
<keyword id="KW-0679">Respiratory chain</keyword>
<keyword id="KW-0809">Transit peptide</keyword>
<keyword id="KW-1278">Translocase</keyword>
<keyword id="KW-0812">Transmembrane</keyword>
<keyword id="KW-1133">Transmembrane helix</keyword>
<keyword id="KW-0813">Transport</keyword>
<name>CY12_SOLTU</name>